<keyword id="KW-0007">Acetylation</keyword>
<keyword id="KW-0238">DNA-binding</keyword>
<keyword id="KW-0509">mRNA transport</keyword>
<keyword id="KW-0539">Nucleus</keyword>
<keyword id="KW-0694">RNA-binding</keyword>
<keyword id="KW-0813">Transport</keyword>
<organism>
    <name type="scientific">Saccharomyces cerevisiae (strain Zymaflore VL3)</name>
    <name type="common">Baker's yeast</name>
    <dbReference type="NCBI Taxonomy" id="764100"/>
    <lineage>
        <taxon>Eukaryota</taxon>
        <taxon>Fungi</taxon>
        <taxon>Dikarya</taxon>
        <taxon>Ascomycota</taxon>
        <taxon>Saccharomycotina</taxon>
        <taxon>Saccharomycetes</taxon>
        <taxon>Saccharomycetales</taxon>
        <taxon>Saccharomycetaceae</taxon>
        <taxon>Saccharomyces</taxon>
    </lineage>
</organism>
<evidence type="ECO:0000250" key="1"/>
<evidence type="ECO:0000250" key="2">
    <source>
        <dbReference type="UniProtKB" id="P36036"/>
    </source>
</evidence>
<evidence type="ECO:0000255" key="3">
    <source>
        <dbReference type="PROSITE-ProRule" id="PRU00176"/>
    </source>
</evidence>
<evidence type="ECO:0000256" key="4">
    <source>
        <dbReference type="SAM" id="MobiDB-lite"/>
    </source>
</evidence>
<evidence type="ECO:0000305" key="5"/>
<proteinExistence type="inferred from homology"/>
<feature type="chain" id="PRO_0000409550" description="RNA annealing protein YRA2">
    <location>
        <begin position="1"/>
        <end position="203"/>
    </location>
</feature>
<feature type="domain" description="RRM" evidence="3">
    <location>
        <begin position="64"/>
        <end position="138"/>
    </location>
</feature>
<feature type="region of interest" description="Disordered" evidence="4">
    <location>
        <begin position="1"/>
        <end position="60"/>
    </location>
</feature>
<feature type="region of interest" description="Disordered" evidence="4">
    <location>
        <begin position="134"/>
        <end position="203"/>
    </location>
</feature>
<feature type="compositionally biased region" description="Polar residues" evidence="4">
    <location>
        <begin position="11"/>
        <end position="20"/>
    </location>
</feature>
<feature type="compositionally biased region" description="Basic and acidic residues" evidence="4">
    <location>
        <begin position="47"/>
        <end position="60"/>
    </location>
</feature>
<feature type="compositionally biased region" description="Basic residues" evidence="4">
    <location>
        <begin position="139"/>
        <end position="153"/>
    </location>
</feature>
<feature type="compositionally biased region" description="Basic residues" evidence="4">
    <location>
        <begin position="163"/>
        <end position="180"/>
    </location>
</feature>
<feature type="modified residue" description="N-acetylmethionine" evidence="2">
    <location>
        <position position="1"/>
    </location>
</feature>
<name>YRA2_YEASZ</name>
<sequence>MDKAFDEIIGNSHTDSSSNHKVTRYRRRDLRNELGPRLGFAPSDAASRSKDRLYREREEPPLPKRIRISKIPLDVSDYTLDDMIKEFGSPIFSKIFDNKEDRTCIYEFEDPEVLEKIVERYNGHELHNAKIEVEIYQPQRKHSRMNAHNRRKQTAQEQGRGRPGSHYRQRPNRVSKKNKGREKNNTPTSVEALDAELDAYMKG</sequence>
<dbReference type="EMBL" id="AEJS01000044">
    <property type="protein sequence ID" value="EGA86054.1"/>
    <property type="molecule type" value="Genomic_DNA"/>
</dbReference>
<dbReference type="SMR" id="E7QH16"/>
<dbReference type="HOGENOM" id="CLU_111217_0_0_1"/>
<dbReference type="OrthoDB" id="1099063at2759"/>
<dbReference type="GO" id="GO:0005634">
    <property type="term" value="C:nucleus"/>
    <property type="evidence" value="ECO:0007669"/>
    <property type="project" value="UniProtKB-SubCell"/>
</dbReference>
<dbReference type="GO" id="GO:0003677">
    <property type="term" value="F:DNA binding"/>
    <property type="evidence" value="ECO:0007669"/>
    <property type="project" value="UniProtKB-KW"/>
</dbReference>
<dbReference type="GO" id="GO:0003723">
    <property type="term" value="F:RNA binding"/>
    <property type="evidence" value="ECO:0007669"/>
    <property type="project" value="UniProtKB-KW"/>
</dbReference>
<dbReference type="GO" id="GO:0051028">
    <property type="term" value="P:mRNA transport"/>
    <property type="evidence" value="ECO:0007669"/>
    <property type="project" value="UniProtKB-KW"/>
</dbReference>
<dbReference type="CDD" id="cd12295">
    <property type="entry name" value="RRM_YRA2"/>
    <property type="match status" value="1"/>
</dbReference>
<dbReference type="FunFam" id="3.30.70.330:FF:000793">
    <property type="entry name" value="RNA annealing protein YRA2"/>
    <property type="match status" value="1"/>
</dbReference>
<dbReference type="Gene3D" id="3.30.70.330">
    <property type="match status" value="1"/>
</dbReference>
<dbReference type="InterPro" id="IPR025715">
    <property type="entry name" value="FoP_C"/>
</dbReference>
<dbReference type="InterPro" id="IPR012677">
    <property type="entry name" value="Nucleotide-bd_a/b_plait_sf"/>
</dbReference>
<dbReference type="InterPro" id="IPR035979">
    <property type="entry name" value="RBD_domain_sf"/>
</dbReference>
<dbReference type="InterPro" id="IPR000504">
    <property type="entry name" value="RRM_dom"/>
</dbReference>
<dbReference type="InterPro" id="IPR034396">
    <property type="entry name" value="Yra2_RRM"/>
</dbReference>
<dbReference type="Pfam" id="PF13865">
    <property type="entry name" value="FoP_duplication"/>
    <property type="match status" value="1"/>
</dbReference>
<dbReference type="Pfam" id="PF00076">
    <property type="entry name" value="RRM_1"/>
    <property type="match status" value="1"/>
</dbReference>
<dbReference type="SMART" id="SM00360">
    <property type="entry name" value="RRM"/>
    <property type="match status" value="1"/>
</dbReference>
<dbReference type="SUPFAM" id="SSF54928">
    <property type="entry name" value="RNA-binding domain, RBD"/>
    <property type="match status" value="1"/>
</dbReference>
<dbReference type="PROSITE" id="PS50102">
    <property type="entry name" value="RRM"/>
    <property type="match status" value="1"/>
</dbReference>
<reference key="1">
    <citation type="journal article" date="2011" name="PLoS Genet.">
        <title>Whole-genome comparison reveals novel genetic elements that characterize the genome of industrial strains of Saccharomyces cerevisiae.</title>
        <authorList>
            <person name="Borneman A.R."/>
            <person name="Desany B.A."/>
            <person name="Riches D."/>
            <person name="Affourtit J.P."/>
            <person name="Forgan A.H."/>
            <person name="Pretorius I.S."/>
            <person name="Egholm M."/>
            <person name="Chambers P.J."/>
        </authorList>
    </citation>
    <scope>NUCLEOTIDE SEQUENCE [LARGE SCALE GENOMIC DNA]</scope>
    <source>
        <strain>Zymaflore VL3</strain>
    </source>
</reference>
<accession>E7QH16</accession>
<comment type="function">
    <text evidence="1">Involved in export of poly(A) mRNAs from the nucleus. Recruited to the coding sequences as well as poly-A sites of active genes (By similarity).</text>
</comment>
<comment type="subunit">
    <text evidence="1">Associates with mRNPs. Interacts with YRA1.</text>
</comment>
<comment type="subcellular location">
    <subcellularLocation>
        <location evidence="1">Nucleus</location>
    </subcellularLocation>
</comment>
<comment type="similarity">
    <text evidence="5">Belongs to the YRA1 family.</text>
</comment>
<gene>
    <name type="primary">YRA2</name>
    <name type="ORF">VL3_2771</name>
</gene>
<protein>
    <recommendedName>
        <fullName>RNA annealing protein YRA2</fullName>
    </recommendedName>
</protein>